<gene>
    <name evidence="1" type="primary">ndhJ</name>
</gene>
<dbReference type="EC" id="7.1.1.-" evidence="1"/>
<dbReference type="EMBL" id="AJ506156">
    <property type="protein sequence ID" value="CAD45110.1"/>
    <property type="molecule type" value="Genomic_DNA"/>
</dbReference>
<dbReference type="RefSeq" id="NP_904102.1">
    <property type="nucleotide sequence ID" value="NC_005086.1"/>
</dbReference>
<dbReference type="SMR" id="Q70Y00"/>
<dbReference type="STRING" id="13333.Q70Y00"/>
<dbReference type="GeneID" id="2546613"/>
<dbReference type="KEGG" id="atr:2546613"/>
<dbReference type="OrthoDB" id="1909959at2759"/>
<dbReference type="Proteomes" id="UP000017836">
    <property type="component" value="Chloroplast"/>
</dbReference>
<dbReference type="GO" id="GO:0009535">
    <property type="term" value="C:chloroplast thylakoid membrane"/>
    <property type="evidence" value="ECO:0007669"/>
    <property type="project" value="UniProtKB-SubCell"/>
</dbReference>
<dbReference type="GO" id="GO:0008137">
    <property type="term" value="F:NADH dehydrogenase (ubiquinone) activity"/>
    <property type="evidence" value="ECO:0007669"/>
    <property type="project" value="InterPro"/>
</dbReference>
<dbReference type="GO" id="GO:0048038">
    <property type="term" value="F:quinone binding"/>
    <property type="evidence" value="ECO:0007669"/>
    <property type="project" value="UniProtKB-KW"/>
</dbReference>
<dbReference type="GO" id="GO:0019684">
    <property type="term" value="P:photosynthesis, light reaction"/>
    <property type="evidence" value="ECO:0007669"/>
    <property type="project" value="UniProtKB-UniRule"/>
</dbReference>
<dbReference type="FunFam" id="3.30.460.80:FF:000004">
    <property type="entry name" value="NAD(P)H-quinone oxidoreductase subunit J, chloroplastic"/>
    <property type="match status" value="1"/>
</dbReference>
<dbReference type="Gene3D" id="3.30.460.80">
    <property type="entry name" value="NADH:ubiquinone oxidoreductase, 30kDa subunit"/>
    <property type="match status" value="1"/>
</dbReference>
<dbReference type="HAMAP" id="MF_01357">
    <property type="entry name" value="NDH1_NuoC"/>
    <property type="match status" value="1"/>
</dbReference>
<dbReference type="InterPro" id="IPR010218">
    <property type="entry name" value="NADH_DH_suC"/>
</dbReference>
<dbReference type="InterPro" id="IPR037232">
    <property type="entry name" value="NADH_quin_OxRdtase_su_C/D-like"/>
</dbReference>
<dbReference type="InterPro" id="IPR001268">
    <property type="entry name" value="NADH_UbQ_OxRdtase_30kDa_su"/>
</dbReference>
<dbReference type="InterPro" id="IPR020396">
    <property type="entry name" value="NADH_UbQ_OxRdtase_CS"/>
</dbReference>
<dbReference type="NCBIfam" id="NF009141">
    <property type="entry name" value="PRK12494.1"/>
    <property type="match status" value="1"/>
</dbReference>
<dbReference type="PANTHER" id="PTHR10884:SF14">
    <property type="entry name" value="NADH DEHYDROGENASE [UBIQUINONE] IRON-SULFUR PROTEIN 3, MITOCHONDRIAL"/>
    <property type="match status" value="1"/>
</dbReference>
<dbReference type="PANTHER" id="PTHR10884">
    <property type="entry name" value="NADH DEHYDROGENASE UBIQUINONE IRON-SULFUR PROTEIN 3"/>
    <property type="match status" value="1"/>
</dbReference>
<dbReference type="Pfam" id="PF00329">
    <property type="entry name" value="Complex1_30kDa"/>
    <property type="match status" value="1"/>
</dbReference>
<dbReference type="SUPFAM" id="SSF143243">
    <property type="entry name" value="Nqo5-like"/>
    <property type="match status" value="1"/>
</dbReference>
<dbReference type="PROSITE" id="PS00542">
    <property type="entry name" value="COMPLEX1_30K"/>
    <property type="match status" value="1"/>
</dbReference>
<evidence type="ECO:0000255" key="1">
    <source>
        <dbReference type="HAMAP-Rule" id="MF_01357"/>
    </source>
</evidence>
<keyword id="KW-0150">Chloroplast</keyword>
<keyword id="KW-0472">Membrane</keyword>
<keyword id="KW-0520">NAD</keyword>
<keyword id="KW-0521">NADP</keyword>
<keyword id="KW-0934">Plastid</keyword>
<keyword id="KW-0618">Plastoquinone</keyword>
<keyword id="KW-0874">Quinone</keyword>
<keyword id="KW-1185">Reference proteome</keyword>
<keyword id="KW-0793">Thylakoid</keyword>
<keyword id="KW-1278">Translocase</keyword>
<keyword id="KW-0813">Transport</keyword>
<protein>
    <recommendedName>
        <fullName evidence="1">NAD(P)H-quinone oxidoreductase subunit J, chloroplastic</fullName>
        <ecNumber evidence="1">7.1.1.-</ecNumber>
    </recommendedName>
    <alternativeName>
        <fullName>NAD(P)H dehydrogenase subunit J</fullName>
    </alternativeName>
    <alternativeName>
        <fullName evidence="1">NADH-plastoquinone oxidoreductase subunit J</fullName>
    </alternativeName>
</protein>
<sequence length="158" mass="18775">MQGRLSAWLVKHELVHRSLGFDYQGIETLQIKSEDWYSIAVISYVYGYNYLRSQCAYDVAPGGLLASVYHLTRIQYGVDQPEEVCIKVFAQRRNPRIPSVFWIWKSSDFQERESYDMLGIYYDNHPRLKRILMPESWIGWPLRKDYIAPNFYEIQDAH</sequence>
<proteinExistence type="inferred from homology"/>
<feature type="chain" id="PRO_0000358240" description="NAD(P)H-quinone oxidoreductase subunit J, chloroplastic">
    <location>
        <begin position="1"/>
        <end position="158"/>
    </location>
</feature>
<organism>
    <name type="scientific">Amborella trichopoda</name>
    <dbReference type="NCBI Taxonomy" id="13333"/>
    <lineage>
        <taxon>Eukaryota</taxon>
        <taxon>Viridiplantae</taxon>
        <taxon>Streptophyta</taxon>
        <taxon>Embryophyta</taxon>
        <taxon>Tracheophyta</taxon>
        <taxon>Spermatophyta</taxon>
        <taxon>Magnoliopsida</taxon>
        <taxon>Amborellales</taxon>
        <taxon>Amborellaceae</taxon>
        <taxon>Amborella</taxon>
    </lineage>
</organism>
<geneLocation type="chloroplast"/>
<comment type="function">
    <text evidence="1">NDH shuttles electrons from NAD(P)H:plastoquinone, via FMN and iron-sulfur (Fe-S) centers, to quinones in the photosynthetic chain and possibly in a chloroplast respiratory chain. The immediate electron acceptor for the enzyme in this species is believed to be plastoquinone. Couples the redox reaction to proton translocation, and thus conserves the redox energy in a proton gradient.</text>
</comment>
<comment type="catalytic activity">
    <reaction evidence="1">
        <text>a plastoquinone + NADH + (n+1) H(+)(in) = a plastoquinol + NAD(+) + n H(+)(out)</text>
        <dbReference type="Rhea" id="RHEA:42608"/>
        <dbReference type="Rhea" id="RHEA-COMP:9561"/>
        <dbReference type="Rhea" id="RHEA-COMP:9562"/>
        <dbReference type="ChEBI" id="CHEBI:15378"/>
        <dbReference type="ChEBI" id="CHEBI:17757"/>
        <dbReference type="ChEBI" id="CHEBI:57540"/>
        <dbReference type="ChEBI" id="CHEBI:57945"/>
        <dbReference type="ChEBI" id="CHEBI:62192"/>
    </reaction>
</comment>
<comment type="catalytic activity">
    <reaction evidence="1">
        <text>a plastoquinone + NADPH + (n+1) H(+)(in) = a plastoquinol + NADP(+) + n H(+)(out)</text>
        <dbReference type="Rhea" id="RHEA:42612"/>
        <dbReference type="Rhea" id="RHEA-COMP:9561"/>
        <dbReference type="Rhea" id="RHEA-COMP:9562"/>
        <dbReference type="ChEBI" id="CHEBI:15378"/>
        <dbReference type="ChEBI" id="CHEBI:17757"/>
        <dbReference type="ChEBI" id="CHEBI:57783"/>
        <dbReference type="ChEBI" id="CHEBI:58349"/>
        <dbReference type="ChEBI" id="CHEBI:62192"/>
    </reaction>
</comment>
<comment type="subunit">
    <text evidence="1">NDH is composed of at least 16 different subunits, 5 of which are encoded in the nucleus.</text>
</comment>
<comment type="subcellular location">
    <subcellularLocation>
        <location evidence="1">Plastid</location>
        <location evidence="1">Chloroplast thylakoid membrane</location>
        <topology evidence="1">Peripheral membrane protein</topology>
        <orientation evidence="1">Stromal side</orientation>
    </subcellularLocation>
</comment>
<comment type="similarity">
    <text evidence="1">Belongs to the complex I 30 kDa subunit family.</text>
</comment>
<name>NDHJ_AMBTC</name>
<accession>Q70Y00</accession>
<reference key="1">
    <citation type="journal article" date="2003" name="Mol. Biol. Evol.">
        <title>Analysis of the Amborella trichopoda chloroplast genome sequence suggests that Amborella is not a basal angiosperm.</title>
        <authorList>
            <person name="Goremykin V.V."/>
            <person name="Hirsch-Ernst K.I."/>
            <person name="Wolfl S."/>
            <person name="Hellwig F.H."/>
        </authorList>
    </citation>
    <scope>NUCLEOTIDE SEQUENCE [LARGE SCALE GENOMIC DNA]</scope>
</reference>